<protein>
    <recommendedName>
        <fullName evidence="1">Ethanolamine ammonia-lyase small subunit</fullName>
        <shortName evidence="1">EAL small subunit</shortName>
        <ecNumber evidence="1">4.3.1.7</ecNumber>
    </recommendedName>
</protein>
<organism>
    <name type="scientific">Escherichia coli (strain ATCC 8739 / DSM 1576 / NBRC 3972 / NCIMB 8545 / WDCM 00012 / Crooks)</name>
    <dbReference type="NCBI Taxonomy" id="481805"/>
    <lineage>
        <taxon>Bacteria</taxon>
        <taxon>Pseudomonadati</taxon>
        <taxon>Pseudomonadota</taxon>
        <taxon>Gammaproteobacteria</taxon>
        <taxon>Enterobacterales</taxon>
        <taxon>Enterobacteriaceae</taxon>
        <taxon>Escherichia</taxon>
    </lineage>
</organism>
<dbReference type="EC" id="4.3.1.7" evidence="1"/>
<dbReference type="EMBL" id="CP000946">
    <property type="protein sequence ID" value="ACA76905.1"/>
    <property type="molecule type" value="Genomic_DNA"/>
</dbReference>
<dbReference type="RefSeq" id="WP_000372364.1">
    <property type="nucleotide sequence ID" value="NZ_MTFT01000002.1"/>
</dbReference>
<dbReference type="SMR" id="B1IWM2"/>
<dbReference type="KEGG" id="ecl:EcolC_1239"/>
<dbReference type="HOGENOM" id="CLU_068224_0_0_6"/>
<dbReference type="UniPathway" id="UPA00560"/>
<dbReference type="GO" id="GO:0009350">
    <property type="term" value="C:ethanolamine ammonia-lyase complex"/>
    <property type="evidence" value="ECO:0007669"/>
    <property type="project" value="UniProtKB-UniRule"/>
</dbReference>
<dbReference type="GO" id="GO:0031471">
    <property type="term" value="C:ethanolamine degradation polyhedral organelle"/>
    <property type="evidence" value="ECO:0007669"/>
    <property type="project" value="UniProtKB-UniRule"/>
</dbReference>
<dbReference type="GO" id="GO:0031419">
    <property type="term" value="F:cobalamin binding"/>
    <property type="evidence" value="ECO:0007669"/>
    <property type="project" value="UniProtKB-UniRule"/>
</dbReference>
<dbReference type="GO" id="GO:0008851">
    <property type="term" value="F:ethanolamine ammonia-lyase activity"/>
    <property type="evidence" value="ECO:0007669"/>
    <property type="project" value="UniProtKB-UniRule"/>
</dbReference>
<dbReference type="GO" id="GO:0006520">
    <property type="term" value="P:amino acid metabolic process"/>
    <property type="evidence" value="ECO:0007669"/>
    <property type="project" value="InterPro"/>
</dbReference>
<dbReference type="GO" id="GO:0046336">
    <property type="term" value="P:ethanolamine catabolic process"/>
    <property type="evidence" value="ECO:0007669"/>
    <property type="project" value="UniProtKB-UniRule"/>
</dbReference>
<dbReference type="FunFam" id="3.40.50.11240:FF:000001">
    <property type="entry name" value="Ethanolamine ammonia-lyase light chain"/>
    <property type="match status" value="1"/>
</dbReference>
<dbReference type="Gene3D" id="6.10.140.690">
    <property type="match status" value="1"/>
</dbReference>
<dbReference type="Gene3D" id="6.10.250.2060">
    <property type="match status" value="1"/>
</dbReference>
<dbReference type="Gene3D" id="3.40.50.11240">
    <property type="entry name" value="Ethanolamine ammonia-lyase light chain (EutC)"/>
    <property type="match status" value="1"/>
</dbReference>
<dbReference type="HAMAP" id="MF_00601">
    <property type="entry name" value="EutC"/>
    <property type="match status" value="1"/>
</dbReference>
<dbReference type="InterPro" id="IPR009246">
    <property type="entry name" value="EutC"/>
</dbReference>
<dbReference type="InterPro" id="IPR042251">
    <property type="entry name" value="EutC_C"/>
</dbReference>
<dbReference type="NCBIfam" id="NF003971">
    <property type="entry name" value="PRK05465.1"/>
    <property type="match status" value="1"/>
</dbReference>
<dbReference type="PANTHER" id="PTHR39330">
    <property type="entry name" value="ETHANOLAMINE AMMONIA-LYASE LIGHT CHAIN"/>
    <property type="match status" value="1"/>
</dbReference>
<dbReference type="PANTHER" id="PTHR39330:SF1">
    <property type="entry name" value="ETHANOLAMINE AMMONIA-LYASE SMALL SUBUNIT"/>
    <property type="match status" value="1"/>
</dbReference>
<dbReference type="Pfam" id="PF05985">
    <property type="entry name" value="EutC"/>
    <property type="match status" value="1"/>
</dbReference>
<dbReference type="PIRSF" id="PIRSF018982">
    <property type="entry name" value="EutC"/>
    <property type="match status" value="1"/>
</dbReference>
<comment type="function">
    <text evidence="1">Catalyzes the deamination of various vicinal amino-alcohols to oxo compounds. Allows this organism to utilize ethanolamine as the sole source of nitrogen and carbon in the presence of external vitamin B12.</text>
</comment>
<comment type="catalytic activity">
    <reaction evidence="1">
        <text>ethanolamine = acetaldehyde + NH4(+)</text>
        <dbReference type="Rhea" id="RHEA:15313"/>
        <dbReference type="ChEBI" id="CHEBI:15343"/>
        <dbReference type="ChEBI" id="CHEBI:28938"/>
        <dbReference type="ChEBI" id="CHEBI:57603"/>
        <dbReference type="EC" id="4.3.1.7"/>
    </reaction>
</comment>
<comment type="cofactor">
    <cofactor evidence="1">
        <name>adenosylcob(III)alamin</name>
        <dbReference type="ChEBI" id="CHEBI:18408"/>
    </cofactor>
    <text evidence="1">Binds between the large and small subunits.</text>
</comment>
<comment type="pathway">
    <text evidence="1">Amine and polyamine degradation; ethanolamine degradation.</text>
</comment>
<comment type="subunit">
    <text evidence="1">The basic unit is a heterodimer which dimerizes to form tetramers. The heterotetramers trimerize; 6 large subunits form a core ring with 6 small subunits projecting outwards.</text>
</comment>
<comment type="subcellular location">
    <subcellularLocation>
        <location evidence="1">Bacterial microcompartment</location>
    </subcellularLocation>
</comment>
<comment type="similarity">
    <text evidence="1">Belongs to the EutC family.</text>
</comment>
<sequence length="295" mass="31812">MDQKQIEEIVRSVMASMGQTAPAPSEAKCATTNCAAPVTSESCALDLGSAEAKAWIGVENPHRADVLTELRRSTVARVCTGRAGPRPRTQALLRFLADHSRSKDTVLKEVPEEWVKAQGLLEVRSEISDKNLYLTRPDMGRRLCAEAVEALKAQCVANPDVQVVISDGLSTDAITVNYEEILPPLMAGLKQAGLKVGTPFFVRYGRVKIEDQIGEILGAKVVILLVGERPGLGQSESLSCYAVYSPRMATTVEADRTCISNIHQGGTPPVEAAAVIVDLAKRMLEQKASGINMTR</sequence>
<keyword id="KW-1283">Bacterial microcompartment</keyword>
<keyword id="KW-0846">Cobalamin</keyword>
<keyword id="KW-0170">Cobalt</keyword>
<keyword id="KW-0456">Lyase</keyword>
<accession>B1IWM2</accession>
<proteinExistence type="inferred from homology"/>
<reference key="1">
    <citation type="submission" date="2008-02" db="EMBL/GenBank/DDBJ databases">
        <title>Complete sequence of Escherichia coli C str. ATCC 8739.</title>
        <authorList>
            <person name="Copeland A."/>
            <person name="Lucas S."/>
            <person name="Lapidus A."/>
            <person name="Glavina del Rio T."/>
            <person name="Dalin E."/>
            <person name="Tice H."/>
            <person name="Bruce D."/>
            <person name="Goodwin L."/>
            <person name="Pitluck S."/>
            <person name="Kiss H."/>
            <person name="Brettin T."/>
            <person name="Detter J.C."/>
            <person name="Han C."/>
            <person name="Kuske C.R."/>
            <person name="Schmutz J."/>
            <person name="Larimer F."/>
            <person name="Land M."/>
            <person name="Hauser L."/>
            <person name="Kyrpides N."/>
            <person name="Mikhailova N."/>
            <person name="Ingram L."/>
            <person name="Richardson P."/>
        </authorList>
    </citation>
    <scope>NUCLEOTIDE SEQUENCE [LARGE SCALE GENOMIC DNA]</scope>
    <source>
        <strain>ATCC 8739 / DSM 1576 / NBRC 3972 / NCIMB 8545 / WDCM 00012 / Crooks</strain>
    </source>
</reference>
<evidence type="ECO:0000255" key="1">
    <source>
        <dbReference type="HAMAP-Rule" id="MF_00601"/>
    </source>
</evidence>
<feature type="chain" id="PRO_1000082497" description="Ethanolamine ammonia-lyase small subunit">
    <location>
        <begin position="1"/>
        <end position="295"/>
    </location>
</feature>
<feature type="binding site" evidence="1">
    <location>
        <position position="207"/>
    </location>
    <ligand>
        <name>adenosylcob(III)alamin</name>
        <dbReference type="ChEBI" id="CHEBI:18408"/>
    </ligand>
</feature>
<feature type="binding site" evidence="1">
    <location>
        <position position="228"/>
    </location>
    <ligand>
        <name>adenosylcob(III)alamin</name>
        <dbReference type="ChEBI" id="CHEBI:18408"/>
    </ligand>
</feature>
<feature type="binding site" evidence="1">
    <location>
        <position position="258"/>
    </location>
    <ligand>
        <name>adenosylcob(III)alamin</name>
        <dbReference type="ChEBI" id="CHEBI:18408"/>
    </ligand>
</feature>
<gene>
    <name evidence="1" type="primary">eutC</name>
    <name type="ordered locus">EcolC_1239</name>
</gene>
<name>EUTC_ECOLC</name>